<reference key="1">
    <citation type="journal article" date="2004" name="EMBO J.">
        <title>A novel protein-conjugating system for Ufm1, a ubiquitin-fold modifier.</title>
        <authorList>
            <person name="Komatsu M."/>
            <person name="Chiba T."/>
            <person name="Tatsumi K."/>
            <person name="Iemura S."/>
            <person name="Tanida I."/>
            <person name="Okazaki N."/>
            <person name="Ueno T."/>
            <person name="Kominami E."/>
            <person name="Natsume T."/>
            <person name="Tanaka K."/>
        </authorList>
    </citation>
    <scope>NUCLEOTIDE SEQUENCE [MRNA] (ISOFORM 1)</scope>
    <scope>FUNCTION</scope>
    <scope>MUTAGENESIS OF CYS-250</scope>
</reference>
<reference key="2">
    <citation type="journal article" date="2005" name="Mol. Biol. Rep.">
        <title>Isolation and characterization of ubiquitin-activating enzyme E1-domain containing 1, UBE1DC1.</title>
        <authorList>
            <person name="Dou T."/>
            <person name="Gu S."/>
            <person name="Liu J."/>
            <person name="Chen F."/>
            <person name="Zeng L."/>
            <person name="Guo L."/>
            <person name="Xie Y."/>
            <person name="Mao Y."/>
        </authorList>
    </citation>
    <scope>NUCLEOTIDE SEQUENCE [MRNA] (ISOFORM 1)</scope>
    <scope>TISSUE SPECIFICITY</scope>
</reference>
<reference key="3">
    <citation type="journal article" date="2001" name="Genome Res.">
        <title>Towards a catalog of human genes and proteins: sequencing and analysis of 500 novel complete protein coding human cDNAs.</title>
        <authorList>
            <person name="Wiemann S."/>
            <person name="Weil B."/>
            <person name="Wellenreuther R."/>
            <person name="Gassenhuber J."/>
            <person name="Glassl S."/>
            <person name="Ansorge W."/>
            <person name="Boecher M."/>
            <person name="Bloecker H."/>
            <person name="Bauersachs S."/>
            <person name="Blum H."/>
            <person name="Lauber J."/>
            <person name="Duesterhoeft A."/>
            <person name="Beyer A."/>
            <person name="Koehrer K."/>
            <person name="Strack N."/>
            <person name="Mewes H.-W."/>
            <person name="Ottenwaelder B."/>
            <person name="Obermaier B."/>
            <person name="Tampe J."/>
            <person name="Heubner D."/>
            <person name="Wambutt R."/>
            <person name="Korn B."/>
            <person name="Klein M."/>
            <person name="Poustka A."/>
        </authorList>
    </citation>
    <scope>NUCLEOTIDE SEQUENCE [LARGE SCALE MRNA] (ISOFORM 1)</scope>
    <source>
        <tissue>Testis</tissue>
    </source>
</reference>
<reference key="4">
    <citation type="journal article" date="2004" name="Nat. Genet.">
        <title>Complete sequencing and characterization of 21,243 full-length human cDNAs.</title>
        <authorList>
            <person name="Ota T."/>
            <person name="Suzuki Y."/>
            <person name="Nishikawa T."/>
            <person name="Otsuki T."/>
            <person name="Sugiyama T."/>
            <person name="Irie R."/>
            <person name="Wakamatsu A."/>
            <person name="Hayashi K."/>
            <person name="Sato H."/>
            <person name="Nagai K."/>
            <person name="Kimura K."/>
            <person name="Makita H."/>
            <person name="Sekine M."/>
            <person name="Obayashi M."/>
            <person name="Nishi T."/>
            <person name="Shibahara T."/>
            <person name="Tanaka T."/>
            <person name="Ishii S."/>
            <person name="Yamamoto J."/>
            <person name="Saito K."/>
            <person name="Kawai Y."/>
            <person name="Isono Y."/>
            <person name="Nakamura Y."/>
            <person name="Nagahari K."/>
            <person name="Murakami K."/>
            <person name="Yasuda T."/>
            <person name="Iwayanagi T."/>
            <person name="Wagatsuma M."/>
            <person name="Shiratori A."/>
            <person name="Sudo H."/>
            <person name="Hosoiri T."/>
            <person name="Kaku Y."/>
            <person name="Kodaira H."/>
            <person name="Kondo H."/>
            <person name="Sugawara M."/>
            <person name="Takahashi M."/>
            <person name="Kanda K."/>
            <person name="Yokoi T."/>
            <person name="Furuya T."/>
            <person name="Kikkawa E."/>
            <person name="Omura Y."/>
            <person name="Abe K."/>
            <person name="Kamihara K."/>
            <person name="Katsuta N."/>
            <person name="Sato K."/>
            <person name="Tanikawa M."/>
            <person name="Yamazaki M."/>
            <person name="Ninomiya K."/>
            <person name="Ishibashi T."/>
            <person name="Yamashita H."/>
            <person name="Murakawa K."/>
            <person name="Fujimori K."/>
            <person name="Tanai H."/>
            <person name="Kimata M."/>
            <person name="Watanabe M."/>
            <person name="Hiraoka S."/>
            <person name="Chiba Y."/>
            <person name="Ishida S."/>
            <person name="Ono Y."/>
            <person name="Takiguchi S."/>
            <person name="Watanabe S."/>
            <person name="Yosida M."/>
            <person name="Hotuta T."/>
            <person name="Kusano J."/>
            <person name="Kanehori K."/>
            <person name="Takahashi-Fujii A."/>
            <person name="Hara H."/>
            <person name="Tanase T.-O."/>
            <person name="Nomura Y."/>
            <person name="Togiya S."/>
            <person name="Komai F."/>
            <person name="Hara R."/>
            <person name="Takeuchi K."/>
            <person name="Arita M."/>
            <person name="Imose N."/>
            <person name="Musashino K."/>
            <person name="Yuuki H."/>
            <person name="Oshima A."/>
            <person name="Sasaki N."/>
            <person name="Aotsuka S."/>
            <person name="Yoshikawa Y."/>
            <person name="Matsunawa H."/>
            <person name="Ichihara T."/>
            <person name="Shiohata N."/>
            <person name="Sano S."/>
            <person name="Moriya S."/>
            <person name="Momiyama H."/>
            <person name="Satoh N."/>
            <person name="Takami S."/>
            <person name="Terashima Y."/>
            <person name="Suzuki O."/>
            <person name="Nakagawa S."/>
            <person name="Senoh A."/>
            <person name="Mizoguchi H."/>
            <person name="Goto Y."/>
            <person name="Shimizu F."/>
            <person name="Wakebe H."/>
            <person name="Hishigaki H."/>
            <person name="Watanabe T."/>
            <person name="Sugiyama A."/>
            <person name="Takemoto M."/>
            <person name="Kawakami B."/>
            <person name="Yamazaki M."/>
            <person name="Watanabe K."/>
            <person name="Kumagai A."/>
            <person name="Itakura S."/>
            <person name="Fukuzumi Y."/>
            <person name="Fujimori Y."/>
            <person name="Komiyama M."/>
            <person name="Tashiro H."/>
            <person name="Tanigami A."/>
            <person name="Fujiwara T."/>
            <person name="Ono T."/>
            <person name="Yamada K."/>
            <person name="Fujii Y."/>
            <person name="Ozaki K."/>
            <person name="Hirao M."/>
            <person name="Ohmori Y."/>
            <person name="Kawabata A."/>
            <person name="Hikiji T."/>
            <person name="Kobatake N."/>
            <person name="Inagaki H."/>
            <person name="Ikema Y."/>
            <person name="Okamoto S."/>
            <person name="Okitani R."/>
            <person name="Kawakami T."/>
            <person name="Noguchi S."/>
            <person name="Itoh T."/>
            <person name="Shigeta K."/>
            <person name="Senba T."/>
            <person name="Matsumura K."/>
            <person name="Nakajima Y."/>
            <person name="Mizuno T."/>
            <person name="Morinaga M."/>
            <person name="Sasaki M."/>
            <person name="Togashi T."/>
            <person name="Oyama M."/>
            <person name="Hata H."/>
            <person name="Watanabe M."/>
            <person name="Komatsu T."/>
            <person name="Mizushima-Sugano J."/>
            <person name="Satoh T."/>
            <person name="Shirai Y."/>
            <person name="Takahashi Y."/>
            <person name="Nakagawa K."/>
            <person name="Okumura K."/>
            <person name="Nagase T."/>
            <person name="Nomura N."/>
            <person name="Kikuchi H."/>
            <person name="Masuho Y."/>
            <person name="Yamashita R."/>
            <person name="Nakai K."/>
            <person name="Yada T."/>
            <person name="Nakamura Y."/>
            <person name="Ohara O."/>
            <person name="Isogai T."/>
            <person name="Sugano S."/>
        </authorList>
    </citation>
    <scope>NUCLEOTIDE SEQUENCE [LARGE SCALE MRNA] (ISOFORM 1)</scope>
    <source>
        <tissue>Colon</tissue>
        <tissue>Teratocarcinoma</tissue>
    </source>
</reference>
<reference key="5">
    <citation type="journal article" date="2006" name="Nature">
        <title>The DNA sequence, annotation and analysis of human chromosome 3.</title>
        <authorList>
            <person name="Muzny D.M."/>
            <person name="Scherer S.E."/>
            <person name="Kaul R."/>
            <person name="Wang J."/>
            <person name="Yu J."/>
            <person name="Sudbrak R."/>
            <person name="Buhay C.J."/>
            <person name="Chen R."/>
            <person name="Cree A."/>
            <person name="Ding Y."/>
            <person name="Dugan-Rocha S."/>
            <person name="Gill R."/>
            <person name="Gunaratne P."/>
            <person name="Harris R.A."/>
            <person name="Hawes A.C."/>
            <person name="Hernandez J."/>
            <person name="Hodgson A.V."/>
            <person name="Hume J."/>
            <person name="Jackson A."/>
            <person name="Khan Z.M."/>
            <person name="Kovar-Smith C."/>
            <person name="Lewis L.R."/>
            <person name="Lozado R.J."/>
            <person name="Metzker M.L."/>
            <person name="Milosavljevic A."/>
            <person name="Miner G.R."/>
            <person name="Morgan M.B."/>
            <person name="Nazareth L.V."/>
            <person name="Scott G."/>
            <person name="Sodergren E."/>
            <person name="Song X.-Z."/>
            <person name="Steffen D."/>
            <person name="Wei S."/>
            <person name="Wheeler D.A."/>
            <person name="Wright M.W."/>
            <person name="Worley K.C."/>
            <person name="Yuan Y."/>
            <person name="Zhang Z."/>
            <person name="Adams C.Q."/>
            <person name="Ansari-Lari M.A."/>
            <person name="Ayele M."/>
            <person name="Brown M.J."/>
            <person name="Chen G."/>
            <person name="Chen Z."/>
            <person name="Clendenning J."/>
            <person name="Clerc-Blankenburg K.P."/>
            <person name="Chen R."/>
            <person name="Chen Z."/>
            <person name="Davis C."/>
            <person name="Delgado O."/>
            <person name="Dinh H.H."/>
            <person name="Dong W."/>
            <person name="Draper H."/>
            <person name="Ernst S."/>
            <person name="Fu G."/>
            <person name="Gonzalez-Garay M.L."/>
            <person name="Garcia D.K."/>
            <person name="Gillett W."/>
            <person name="Gu J."/>
            <person name="Hao B."/>
            <person name="Haugen E."/>
            <person name="Havlak P."/>
            <person name="He X."/>
            <person name="Hennig S."/>
            <person name="Hu S."/>
            <person name="Huang W."/>
            <person name="Jackson L.R."/>
            <person name="Jacob L.S."/>
            <person name="Kelly S.H."/>
            <person name="Kube M."/>
            <person name="Levy R."/>
            <person name="Li Z."/>
            <person name="Liu B."/>
            <person name="Liu J."/>
            <person name="Liu W."/>
            <person name="Lu J."/>
            <person name="Maheshwari M."/>
            <person name="Nguyen B.-V."/>
            <person name="Okwuonu G.O."/>
            <person name="Palmeiri A."/>
            <person name="Pasternak S."/>
            <person name="Perez L.M."/>
            <person name="Phelps K.A."/>
            <person name="Plopper F.J."/>
            <person name="Qiang B."/>
            <person name="Raymond C."/>
            <person name="Rodriguez R."/>
            <person name="Saenphimmachak C."/>
            <person name="Santibanez J."/>
            <person name="Shen H."/>
            <person name="Shen Y."/>
            <person name="Subramanian S."/>
            <person name="Tabor P.E."/>
            <person name="Verduzco D."/>
            <person name="Waldron L."/>
            <person name="Wang J."/>
            <person name="Wang J."/>
            <person name="Wang Q."/>
            <person name="Williams G.A."/>
            <person name="Wong G.K.-S."/>
            <person name="Yao Z."/>
            <person name="Zhang J."/>
            <person name="Zhang X."/>
            <person name="Zhao G."/>
            <person name="Zhou J."/>
            <person name="Zhou Y."/>
            <person name="Nelson D."/>
            <person name="Lehrach H."/>
            <person name="Reinhardt R."/>
            <person name="Naylor S.L."/>
            <person name="Yang H."/>
            <person name="Olson M."/>
            <person name="Weinstock G."/>
            <person name="Gibbs R.A."/>
        </authorList>
    </citation>
    <scope>NUCLEOTIDE SEQUENCE [LARGE SCALE GENOMIC DNA]</scope>
</reference>
<reference key="6">
    <citation type="submission" date="2005-09" db="EMBL/GenBank/DDBJ databases">
        <authorList>
            <person name="Mural R.J."/>
            <person name="Istrail S."/>
            <person name="Sutton G.G."/>
            <person name="Florea L."/>
            <person name="Halpern A.L."/>
            <person name="Mobarry C.M."/>
            <person name="Lippert R."/>
            <person name="Walenz B."/>
            <person name="Shatkay H."/>
            <person name="Dew I."/>
            <person name="Miller J.R."/>
            <person name="Flanigan M.J."/>
            <person name="Edwards N.J."/>
            <person name="Bolanos R."/>
            <person name="Fasulo D."/>
            <person name="Halldorsson B.V."/>
            <person name="Hannenhalli S."/>
            <person name="Turner R."/>
            <person name="Yooseph S."/>
            <person name="Lu F."/>
            <person name="Nusskern D.R."/>
            <person name="Shue B.C."/>
            <person name="Zheng X.H."/>
            <person name="Zhong F."/>
            <person name="Delcher A.L."/>
            <person name="Huson D.H."/>
            <person name="Kravitz S.A."/>
            <person name="Mouchard L."/>
            <person name="Reinert K."/>
            <person name="Remington K.A."/>
            <person name="Clark A.G."/>
            <person name="Waterman M.S."/>
            <person name="Eichler E.E."/>
            <person name="Adams M.D."/>
            <person name="Hunkapiller M.W."/>
            <person name="Myers E.W."/>
            <person name="Venter J.C."/>
        </authorList>
    </citation>
    <scope>NUCLEOTIDE SEQUENCE [LARGE SCALE GENOMIC DNA]</scope>
</reference>
<reference key="7">
    <citation type="journal article" date="2004" name="Genome Res.">
        <title>The status, quality, and expansion of the NIH full-length cDNA project: the Mammalian Gene Collection (MGC).</title>
        <authorList>
            <consortium name="The MGC Project Team"/>
        </authorList>
    </citation>
    <scope>NUCLEOTIDE SEQUENCE [LARGE SCALE MRNA]</scope>
    <source>
        <tissue>Lung</tissue>
    </source>
</reference>
<reference key="8">
    <citation type="journal article" date="2007" name="Biochem. Biophys. Res. Commun.">
        <title>Crystal structure of Ufc1, the Ufm1-conjugating enzyme.</title>
        <authorList>
            <person name="Mizushima T."/>
            <person name="Tatsumi K."/>
            <person name="Ozaki Y."/>
            <person name="Kawakami T."/>
            <person name="Suzuki A."/>
            <person name="Ogasahara K."/>
            <person name="Komatsu M."/>
            <person name="Kominami E."/>
            <person name="Tanaka K."/>
            <person name="Yamane T."/>
        </authorList>
    </citation>
    <scope>INTERACTION WITH UFC1</scope>
</reference>
<reference key="9">
    <citation type="journal article" date="2008" name="J. Cell. Biochem.">
        <title>UBE1DC1, an ubiquitin-activating enzyme, activates two different ubiquitin-like proteins.</title>
        <authorList>
            <person name="Zheng M."/>
            <person name="Gu X."/>
            <person name="Zheng D."/>
            <person name="Yang Z."/>
            <person name="Li F."/>
            <person name="Zhao J."/>
            <person name="Xie Y."/>
            <person name="Ji C."/>
            <person name="Mao Y."/>
        </authorList>
    </citation>
    <scope>FUNCTION</scope>
    <scope>ALTERNATIVE SPLICING (ISOFORMS 1 AND 2)</scope>
    <scope>SUBCELLULAR LOCATION</scope>
</reference>
<reference key="10">
    <citation type="journal article" date="2008" name="Proc. Natl. Acad. Sci. U.S.A.">
        <title>A quantitative atlas of mitotic phosphorylation.</title>
        <authorList>
            <person name="Dephoure N."/>
            <person name="Zhou C."/>
            <person name="Villen J."/>
            <person name="Beausoleil S.A."/>
            <person name="Bakalarski C.E."/>
            <person name="Elledge S.J."/>
            <person name="Gygi S.P."/>
        </authorList>
    </citation>
    <scope>IDENTIFICATION BY MASS SPECTROMETRY [LARGE SCALE ANALYSIS]</scope>
    <source>
        <tissue>Cervix carcinoma</tissue>
    </source>
</reference>
<reference key="11">
    <citation type="journal article" date="2009" name="Sci. Signal.">
        <title>Quantitative phosphoproteomic analysis of T cell receptor signaling reveals system-wide modulation of protein-protein interactions.</title>
        <authorList>
            <person name="Mayya V."/>
            <person name="Lundgren D.H."/>
            <person name="Hwang S.-I."/>
            <person name="Rezaul K."/>
            <person name="Wu L."/>
            <person name="Eng J.K."/>
            <person name="Rodionov V."/>
            <person name="Han D.K."/>
        </authorList>
    </citation>
    <scope>PHOSPHORYLATION [LARGE SCALE ANALYSIS] AT SER-45</scope>
    <scope>IDENTIFICATION BY MASS SPECTROMETRY [LARGE SCALE ANALYSIS]</scope>
    <source>
        <tissue>Leukemic T-cell</tissue>
    </source>
</reference>
<reference key="12">
    <citation type="journal article" date="2010" name="Sci. Signal.">
        <title>Quantitative phosphoproteomics reveals widespread full phosphorylation site occupancy during mitosis.</title>
        <authorList>
            <person name="Olsen J.V."/>
            <person name="Vermeulen M."/>
            <person name="Santamaria A."/>
            <person name="Kumar C."/>
            <person name="Miller M.L."/>
            <person name="Jensen L.J."/>
            <person name="Gnad F."/>
            <person name="Cox J."/>
            <person name="Jensen T.S."/>
            <person name="Nigg E.A."/>
            <person name="Brunak S."/>
            <person name="Mann M."/>
        </authorList>
    </citation>
    <scope>PHOSPHORYLATION [LARGE SCALE ANALYSIS] AT SER-358</scope>
    <scope>IDENTIFICATION BY MASS SPECTROMETRY [LARGE SCALE ANALYSIS]</scope>
    <source>
        <tissue>Cervix carcinoma</tissue>
    </source>
</reference>
<reference key="13">
    <citation type="journal article" date="2011" name="BMC Syst. Biol.">
        <title>Initial characterization of the human central proteome.</title>
        <authorList>
            <person name="Burkard T.R."/>
            <person name="Planyavsky M."/>
            <person name="Kaupe I."/>
            <person name="Breitwieser F.P."/>
            <person name="Buerckstuemmer T."/>
            <person name="Bennett K.L."/>
            <person name="Superti-Furga G."/>
            <person name="Colinge J."/>
        </authorList>
    </citation>
    <scope>IDENTIFICATION BY MASS SPECTROMETRY [LARGE SCALE ANALYSIS]</scope>
</reference>
<reference key="14">
    <citation type="journal article" date="2013" name="J. Proteome Res.">
        <title>Toward a comprehensive characterization of a human cancer cell phosphoproteome.</title>
        <authorList>
            <person name="Zhou H."/>
            <person name="Di Palma S."/>
            <person name="Preisinger C."/>
            <person name="Peng M."/>
            <person name="Polat A.N."/>
            <person name="Heck A.J."/>
            <person name="Mohammed S."/>
        </authorList>
    </citation>
    <scope>PHOSPHORYLATION [LARGE SCALE ANALYSIS] AT SER-45</scope>
    <scope>IDENTIFICATION BY MASS SPECTROMETRY [LARGE SCALE ANALYSIS]</scope>
    <source>
        <tissue>Erythroleukemia</tissue>
    </source>
</reference>
<reference key="15">
    <citation type="journal article" date="2014" name="Mol. Cell">
        <title>Modification of ASC1 by UFM1 is crucial for ERalpha transactivation and breast cancer development.</title>
        <authorList>
            <person name="Yoo H.M."/>
            <person name="Kang S.H."/>
            <person name="Kim J.Y."/>
            <person name="Lee J.E."/>
            <person name="Seong M.W."/>
            <person name="Lee S.W."/>
            <person name="Ka S.H."/>
            <person name="Sou Y.S."/>
            <person name="Komatsu M."/>
            <person name="Tanaka K."/>
            <person name="Lee S.T."/>
            <person name="Noh D.Y."/>
            <person name="Baek S.H."/>
            <person name="Jeon Y.J."/>
            <person name="Chung C.H."/>
        </authorList>
    </citation>
    <scope>FUNCTION</scope>
</reference>
<reference key="16">
    <citation type="journal article" date="2018" name="Brain">
        <title>Biallelic UFM1 and UFC1 mutations expand the essential role of ufmylation in brain development.</title>
        <authorList>
            <person name="Nahorski M.S."/>
            <person name="Maddirevula S."/>
            <person name="Ishimura R."/>
            <person name="Alsahli S."/>
            <person name="Brady A.F."/>
            <person name="Begemann A."/>
            <person name="Mizushima T."/>
            <person name="Guzman-Vega F.J."/>
            <person name="Obata M."/>
            <person name="Ichimura Y."/>
            <person name="Alsaif H.S."/>
            <person name="Anazi S."/>
            <person name="Ibrahim N."/>
            <person name="Abdulwahab F."/>
            <person name="Hashem M."/>
            <person name="Monies D."/>
            <person name="Abouelhoda M."/>
            <person name="Meyer B.F."/>
            <person name="Alfadhel M."/>
            <person name="Eyaid W."/>
            <person name="Zweier M."/>
            <person name="Steindl K."/>
            <person name="Rauch A."/>
            <person name="Arold S.T."/>
            <person name="Woods C.G."/>
            <person name="Komatsu M."/>
            <person name="Alkuraya F.S."/>
        </authorList>
    </citation>
    <scope>INTERACTION WITH UFC1</scope>
    <scope>MUTAGENESIS OF CYS-250</scope>
</reference>
<reference key="17">
    <citation type="journal article" date="2018" name="FASEB J.">
        <title>Trans-binding of UFM1 to UBA5 stimulates UBA5 homodimerization and ATP binding.</title>
        <authorList>
            <person name="Mashahreh B."/>
            <person name="Hassouna F."/>
            <person name="Soudah N."/>
            <person name="Cohen-Kfir E."/>
            <person name="Strulovich R."/>
            <person name="Haitin Y."/>
            <person name="Wiener R."/>
        </authorList>
    </citation>
    <scope>FUNCTION</scope>
    <scope>SUBUNIT</scope>
    <scope>INTERACTION WITH UFM1</scope>
    <scope>MUTAGENESIS OF ASP-290</scope>
</reference>
<reference key="18">
    <citation type="journal article" date="2019" name="Proc. Natl. Acad. Sci. U.S.A.">
        <title>Ribosomal protein RPL26 is the principal target of UFMylation.</title>
        <authorList>
            <person name="Walczak C.P."/>
            <person name="Leto D.E."/>
            <person name="Zhang L."/>
            <person name="Riepe C."/>
            <person name="Muller R.Y."/>
            <person name="DaRosa P.A."/>
            <person name="Ingolia N.T."/>
            <person name="Elias J.E."/>
            <person name="Kopito R.R."/>
        </authorList>
    </citation>
    <scope>FUNCTION</scope>
</reference>
<reference key="19">
    <citation type="journal article" date="2020" name="Cell">
        <title>A genome-wide ER-phagy screen highlights key roles of mitochondrial metabolism and ER-Resident UFMylation.</title>
        <authorList>
            <person name="Liang J.R."/>
            <person name="Lingeman E."/>
            <person name="Luong T."/>
            <person name="Ahmed S."/>
            <person name="Muhar M."/>
            <person name="Nguyen T."/>
            <person name="Olzmann J.A."/>
            <person name="Corn J.E."/>
        </authorList>
    </citation>
    <scope>FUNCTION</scope>
</reference>
<reference key="20">
    <citation type="journal article" date="2022" name="Proc. Natl. Acad. Sci. U.S.A.">
        <title>Signaling from the RNA sensor RIG-I is regulated by ufmylation.</title>
        <authorList>
            <person name="Snider D.L."/>
            <person name="Park M."/>
            <person name="Murphy K.A."/>
            <person name="Beachboard D.C."/>
            <person name="Horner S.M."/>
        </authorList>
    </citation>
    <scope>FUNCTION</scope>
</reference>
<reference evidence="28 29" key="21">
    <citation type="journal article" date="2010" name="J. Biol. Chem.">
        <title>Crystal structure of the human ubiquitin-activating enzyme 5 (UBA5) bound to ATP: mechanistic insights into a minimalistic E1 enzyme.</title>
        <authorList>
            <person name="Bacik J.P."/>
            <person name="Walker J.R."/>
            <person name="Ali M."/>
            <person name="Schimmer A.D."/>
            <person name="Dhe-Paganon S."/>
        </authorList>
    </citation>
    <scope>X-RAY CRYSTALLOGRAPHY (2.0 ANGSTROMS) OF 57-329 IN COMPLEX WITH ATP AND ZINC</scope>
    <scope>FUNCTION</scope>
    <scope>ACTIVE SITE</scope>
</reference>
<reference evidence="32 33" key="22">
    <citation type="journal article" date="2016" name="Cell Rep.">
        <title>Trans-binding mechanism of ubiquitin-like protein activation revealed by a UBA5-UFM1 Complex.</title>
        <authorList>
            <person name="Oweis W."/>
            <person name="Padala P."/>
            <person name="Hassouna F."/>
            <person name="Cohen-Kfir E."/>
            <person name="Gibbs D.R."/>
            <person name="Todd E.A."/>
            <person name="Berndsen C.E."/>
            <person name="Wiener R."/>
        </authorList>
    </citation>
    <scope>X-RAY CRYSTALLOGRAPHY (1.85 ANGSTROMS) OF 57-346 IN COMPLEX WITH UFM1; AMP AND ZINC</scope>
    <scope>FUNCTION</scope>
    <scope>CATALYTIC ACTIVITY</scope>
    <scope>SUBUNIT</scope>
    <scope>INTERACTION WITH UFM1 AND UFC1</scope>
    <scope>MUTAGENESIS OF ARG-188; 215-HIS--GLN-217; 230-ALA--LEU-233; CYS-250; LYS-271 AND ASP-290</scope>
</reference>
<reference evidence="30" key="23">
    <citation type="journal article" date="2016" name="J. Biol. Chem.">
        <title>Structural and functional analysis of a novel interaction motif within UFM1-activating enzyme 5 (UBA5) required for binding to ubiquitin-like proteins and ufmylation.</title>
        <authorList>
            <person name="Habisov S."/>
            <person name="Huber J."/>
            <person name="Ichimura Y."/>
            <person name="Akutsu M."/>
            <person name="Rogova N."/>
            <person name="Loehr F."/>
            <person name="McEwan D.G."/>
            <person name="Johansen T."/>
            <person name="Dikic I."/>
            <person name="Doetsch V."/>
            <person name="Komatsu M."/>
            <person name="Rogov V.V."/>
            <person name="Kirkin V."/>
        </authorList>
    </citation>
    <scope>X-RAY CRYSTALLOGRAPHY (2.55 ANGSTROMS) OF 338-346 IN COMPLEX WITH UFM1</scope>
    <scope>FUNCTION</scope>
    <scope>INTERACTION WITH UFM1; GABARAPL2; GABARAP AND GABARAPL1</scope>
    <scope>DOMAIN</scope>
    <scope>MUTAGENESIS OF TRP-341; GLY-342; ILE-343; LEU-345 AND VAL-346</scope>
</reference>
<reference evidence="31" key="24">
    <citation type="journal article" date="2017" name="Sci. Rep.">
        <title>Novel insights into the interaction of UBA5 with UFM1 via a UFM1-interacting sequence.</title>
        <authorList>
            <person name="Padala P."/>
            <person name="Oweis W."/>
            <person name="Mashahreh B."/>
            <person name="Soudah N."/>
            <person name="Cohen-Kfir E."/>
            <person name="Todd E.A."/>
            <person name="Berndsen C.E."/>
            <person name="Wiener R."/>
        </authorList>
    </citation>
    <scope>X-RAY CRYSTALLOGRAPHY (2.00 ANGSTROMS) OF 334-346 AND 350-350 IN COMPLEX WITH UFM1</scope>
    <scope>INTERACTION WITH UFM1</scope>
    <scope>MUTAGENESIS OF HIS-336 AND 343-ILE--LEU-345</scope>
</reference>
<reference evidence="36" key="25">
    <citation type="journal article" date="2020" name="Autophagy">
        <title>An atypical LIR motif within UBA5 (ubiquitin like modifier activating enzyme 5) interacts with GABARAP proteins and mediates membrane localization of UBA5.</title>
        <authorList>
            <person name="Huber J."/>
            <person name="Obata M."/>
            <person name="Gruber J."/>
            <person name="Akutsu M."/>
            <person name="Lohr F."/>
            <person name="Rogova N."/>
            <person name="Guntert P."/>
            <person name="Dikic I."/>
            <person name="Kirkin V."/>
            <person name="Komatsu M."/>
            <person name="Dotsch V."/>
            <person name="Rogov V.V."/>
        </authorList>
    </citation>
    <scope>STRUCTURE BY NMR OF 333-348 IN COMPLEX WITH GABARAPL2</scope>
    <scope>INTERACTION WITH GABARAPL2</scope>
    <scope>MUTAGENESIS OF TRP-341; ILE-343; LEU-345 AND VAL-346</scope>
</reference>
<reference evidence="34 35" key="26">
    <citation type="journal article" date="2019" name="J. Mol. Biol.">
        <title>An N-terminal extension to UBA5 adenylation domain boosts UFM1 activation: isoform-specific differences in ubiquitin-like protein activation.</title>
        <authorList>
            <person name="Soudah N."/>
            <person name="Padala P."/>
            <person name="Hassouna F."/>
            <person name="Kumar M."/>
            <person name="Mashahreh B."/>
            <person name="Lebedev A.A."/>
            <person name="Isupov M.N."/>
            <person name="Cohen-Kfir E."/>
            <person name="Wiener R."/>
        </authorList>
    </citation>
    <scope>X-RAY CRYSTALLOGRAPHY (2.10 ANGSTROMS) OF 36-346 IN COMPLEX WITH UFM1; AMP AND ZINC</scope>
    <scope>FUNCTION</scope>
    <scope>INTERACTION WITH UFM1</scope>
</reference>
<reference evidence="39" key="27">
    <citation type="journal article" date="2021" name="Int. J. Mol. Sci.">
        <title>A concerted action of UBA5 C-terminal unstructured regions is important for transfer of activated UFM1 to UFC1.</title>
        <authorList>
            <person name="Wesch N."/>
            <person name="Loehr F."/>
            <person name="Rogova N."/>
            <person name="Doetsch V."/>
            <person name="Rogov V.V."/>
        </authorList>
    </citation>
    <scope>STRUCTURE BY NMR OF 381-404 IN COMPLEX WITH UFC1</scope>
    <scope>INTERACTION WITH UFC1; GABARAP AND GABARAPL2</scope>
</reference>
<reference evidence="37 38" key="28">
    <citation type="journal article" date="2021" name="Nat. Commun.">
        <title>Structural basis for UFM1 transfer from UBA5 to UFC1.</title>
        <authorList>
            <person name="Kumar M."/>
            <person name="Padala P."/>
            <person name="Fahoum J."/>
            <person name="Hassouna F."/>
            <person name="Tsaban T."/>
            <person name="Zoltsman G."/>
            <person name="Banerjee S."/>
            <person name="Cohen-Kfir E."/>
            <person name="Dessau M."/>
            <person name="Rosenzweig R."/>
            <person name="Isupov M.N."/>
            <person name="Schueler-Furman O."/>
            <person name="Wiener R."/>
        </authorList>
    </citation>
    <scope>X-RAY CRYSTALLOGRAPHY (1.95 ANGSTROMS) OF 389-404 IN COMPLEX WITH UFC1</scope>
    <scope>FUNCTION</scope>
    <scope>INTERACTION WITH UFC1</scope>
    <scope>DOMAIN</scope>
    <scope>ACTIVE SITE</scope>
    <scope>MUTAGENESIS OF CYS-250; TYR-372; LEU-397 AND MET-401</scope>
</reference>
<reference key="29">
    <citation type="journal article" date="2016" name="Am. J. Hum. Genet.">
        <title>Biallelic variants in UBA5 reveal that disruption of the UFM1 cascade can result in early-onset encephalopathy.</title>
        <authorList>
            <consortium name="FREX Consortium"/>
            <person name="Colin E."/>
            <person name="Daniel J."/>
            <person name="Ziegler A."/>
            <person name="Wakim J."/>
            <person name="Scrivo A."/>
            <person name="Haack T.B."/>
            <person name="Khiati S."/>
            <person name="Denomme A.S."/>
            <person name="Amati-Bonneau P."/>
            <person name="Charif M."/>
            <person name="Procaccio V."/>
            <person name="Reynier P."/>
            <person name="Aleck K.A."/>
            <person name="Botto L.D."/>
            <person name="Herper C.L."/>
            <person name="Kaiser C.S."/>
            <person name="Nabbout R."/>
            <person name="N'Guyen S."/>
            <person name="Mora-Lorca J.A."/>
            <person name="Assmann B."/>
            <person name="Christ S."/>
            <person name="Meitinger T."/>
            <person name="Strom T.M."/>
            <person name="Prokisch H."/>
            <person name="Miranda-Vizuete A."/>
            <person name="Hoffmann G.F."/>
            <person name="Lenaers G."/>
            <person name="Bomont P."/>
            <person name="Liebau E."/>
            <person name="Bonneau D."/>
        </authorList>
    </citation>
    <scope>VARIANTS DEE44 VAL-57; GLU-168; MET-260; THR-371 AND TYR-389</scope>
    <scope>CHARACTERIZATION OF VARIANTS DEE44 VAL-57; GLU-168; MET-260; THR-371 AND TYR-389</scope>
    <scope>FUNCTION</scope>
    <scope>INVOLVEMENT IN DEE44</scope>
</reference>
<reference key="30">
    <citation type="journal article" date="2016" name="PLoS ONE">
        <title>UBA5 mutations cause a new form of autosomal recessive cerebellar ataxia.</title>
        <authorList>
            <person name="Duan R."/>
            <person name="Shi Y."/>
            <person name="Yu L."/>
            <person name="Zhang G."/>
            <person name="Li J."/>
            <person name="Lin Y."/>
            <person name="Guo J."/>
            <person name="Wang J."/>
            <person name="Shen L."/>
            <person name="Jiang H."/>
            <person name="Wang G."/>
            <person name="Tang B."/>
        </authorList>
    </citation>
    <scope>VARIANTS SCAR24 GLU-310 AND 246-ARG--MET-404 DEL</scope>
    <scope>CHARACTERIZATION OF VARIANTS SCAR24 GLU-310 AND 246-ARG--MET-404 DEL</scope>
    <scope>INTERACTION WITH UFM1</scope>
    <scope>SUBCELLULAR LOCATION</scope>
    <scope>INVOLVEMENT IN SCAR24</scope>
</reference>
<reference key="31">
    <citation type="journal article" date="2016" name="Am. J. Hum. Genet.">
        <title>Biallelic variants in UBA5 link dysfunctional UFM1 ubiquitin-like modifier pathway to severe infantile-onset encephalopathy.</title>
        <authorList>
            <consortium name="DDD Study"/>
            <person name="Muona M."/>
            <person name="Ishimura R."/>
            <person name="Laari A."/>
            <person name="Ichimura Y."/>
            <person name="Linnankivi T."/>
            <person name="Keski-Filppula R."/>
            <person name="Herva R."/>
            <person name="Rantala H."/>
            <person name="Paetau A."/>
            <person name="Poeyhoenen M."/>
            <person name="Obata M."/>
            <person name="Uemura T."/>
            <person name="Karhu T."/>
            <person name="Bizen N."/>
            <person name="Takebayashi H."/>
            <person name="McKee S."/>
            <person name="Parker M.J."/>
            <person name="Akawi N."/>
            <person name="McRae J."/>
            <person name="Hurles M.E."/>
            <person name="Kuismin O."/>
            <person name="Kurki M.I."/>
            <person name="Anttonen A.K."/>
            <person name="Tanaka K."/>
            <person name="Palotie A."/>
            <person name="Waguri S."/>
            <person name="Lehesjoki A.E."/>
            <person name="Komatsu M."/>
        </authorList>
    </citation>
    <scope>VARIANTS DEE44 HIS-55 AND THR-371</scope>
    <scope>CHARACTERIZATION OF VARIANTS DEE44 HIS-55 AND THR-371</scope>
    <scope>MUTAGENESIS OF CYS-250</scope>
    <scope>FUNCTION</scope>
</reference>
<evidence type="ECO:0000250" key="1">
    <source>
        <dbReference type="UniProtKB" id="Q8VE47"/>
    </source>
</evidence>
<evidence type="ECO:0000269" key="2">
    <source>
    </source>
</evidence>
<evidence type="ECO:0000269" key="3">
    <source>
    </source>
</evidence>
<evidence type="ECO:0000269" key="4">
    <source>
    </source>
</evidence>
<evidence type="ECO:0000269" key="5">
    <source>
    </source>
</evidence>
<evidence type="ECO:0000269" key="6">
    <source>
    </source>
</evidence>
<evidence type="ECO:0000269" key="7">
    <source>
    </source>
</evidence>
<evidence type="ECO:0000269" key="8">
    <source>
    </source>
</evidence>
<evidence type="ECO:0000269" key="9">
    <source>
    </source>
</evidence>
<evidence type="ECO:0000269" key="10">
    <source>
    </source>
</evidence>
<evidence type="ECO:0000269" key="11">
    <source>
    </source>
</evidence>
<evidence type="ECO:0000269" key="12">
    <source>
    </source>
</evidence>
<evidence type="ECO:0000269" key="13">
    <source>
    </source>
</evidence>
<evidence type="ECO:0000269" key="14">
    <source>
    </source>
</evidence>
<evidence type="ECO:0000269" key="15">
    <source>
    </source>
</evidence>
<evidence type="ECO:0000269" key="16">
    <source>
    </source>
</evidence>
<evidence type="ECO:0000269" key="17">
    <source>
    </source>
</evidence>
<evidence type="ECO:0000269" key="18">
    <source>
    </source>
</evidence>
<evidence type="ECO:0000269" key="19">
    <source>
    </source>
</evidence>
<evidence type="ECO:0000269" key="20">
    <source>
    </source>
</evidence>
<evidence type="ECO:0000269" key="21">
    <source>
    </source>
</evidence>
<evidence type="ECO:0000269" key="22">
    <source>
    </source>
</evidence>
<evidence type="ECO:0000303" key="23">
    <source>
    </source>
</evidence>
<evidence type="ECO:0000303" key="24">
    <source>
    </source>
</evidence>
<evidence type="ECO:0000303" key="25">
    <source>
    </source>
</evidence>
<evidence type="ECO:0000305" key="26"/>
<evidence type="ECO:0000312" key="27">
    <source>
        <dbReference type="HGNC" id="HGNC:23230"/>
    </source>
</evidence>
<evidence type="ECO:0007744" key="28">
    <source>
        <dbReference type="PDB" id="3GUC"/>
    </source>
</evidence>
<evidence type="ECO:0007744" key="29">
    <source>
        <dbReference type="PDB" id="3H8V"/>
    </source>
</evidence>
<evidence type="ECO:0007744" key="30">
    <source>
        <dbReference type="PDB" id="5HKH"/>
    </source>
</evidence>
<evidence type="ECO:0007744" key="31">
    <source>
        <dbReference type="PDB" id="5IA8"/>
    </source>
</evidence>
<evidence type="ECO:0007744" key="32">
    <source>
        <dbReference type="PDB" id="5IAA"/>
    </source>
</evidence>
<evidence type="ECO:0007744" key="33">
    <source>
        <dbReference type="PDB" id="5L95"/>
    </source>
</evidence>
<evidence type="ECO:0007744" key="34">
    <source>
        <dbReference type="PDB" id="6H77"/>
    </source>
</evidence>
<evidence type="ECO:0007744" key="35">
    <source>
        <dbReference type="PDB" id="6H78"/>
    </source>
</evidence>
<evidence type="ECO:0007744" key="36">
    <source>
        <dbReference type="PDB" id="6H8C"/>
    </source>
</evidence>
<evidence type="ECO:0007744" key="37">
    <source>
        <dbReference type="PDB" id="7NVK"/>
    </source>
</evidence>
<evidence type="ECO:0007744" key="38">
    <source>
        <dbReference type="PDB" id="7NW1"/>
    </source>
</evidence>
<evidence type="ECO:0007744" key="39">
    <source>
        <dbReference type="PDB" id="7OVC"/>
    </source>
</evidence>
<evidence type="ECO:0007744" key="40">
    <source>
    </source>
</evidence>
<evidence type="ECO:0007744" key="41">
    <source>
    </source>
</evidence>
<evidence type="ECO:0007744" key="42">
    <source>
    </source>
</evidence>
<evidence type="ECO:0007829" key="43">
    <source>
        <dbReference type="PDB" id="3H8V"/>
    </source>
</evidence>
<evidence type="ECO:0007829" key="44">
    <source>
        <dbReference type="PDB" id="6H77"/>
    </source>
</evidence>
<evidence type="ECO:0007829" key="45">
    <source>
        <dbReference type="PDB" id="6H8C"/>
    </source>
</evidence>
<evidence type="ECO:0007829" key="46">
    <source>
        <dbReference type="PDB" id="7OVC"/>
    </source>
</evidence>
<keyword id="KW-0002">3D-structure</keyword>
<keyword id="KW-0025">Alternative splicing</keyword>
<keyword id="KW-0067">ATP-binding</keyword>
<keyword id="KW-0963">Cytoplasm</keyword>
<keyword id="KW-0225">Disease variant</keyword>
<keyword id="KW-0256">Endoplasmic reticulum</keyword>
<keyword id="KW-0887">Epilepsy</keyword>
<keyword id="KW-0333">Golgi apparatus</keyword>
<keyword id="KW-0991">Intellectual disability</keyword>
<keyword id="KW-0472">Membrane</keyword>
<keyword id="KW-0479">Metal-binding</keyword>
<keyword id="KW-0523">Neurodegeneration</keyword>
<keyword id="KW-0547">Nucleotide-binding</keyword>
<keyword id="KW-0539">Nucleus</keyword>
<keyword id="KW-0597">Phosphoprotein</keyword>
<keyword id="KW-1267">Proteomics identification</keyword>
<keyword id="KW-1185">Reference proteome</keyword>
<keyword id="KW-0833">Ubl conjugation pathway</keyword>
<keyword id="KW-0862">Zinc</keyword>
<feature type="chain" id="PRO_0000194970" description="Ubiquitin-like modifier-activating enzyme 5">
    <location>
        <begin position="1"/>
        <end position="404"/>
    </location>
</feature>
<feature type="region of interest" description="Linker" evidence="21">
    <location>
        <begin position="347"/>
        <end position="377"/>
    </location>
</feature>
<feature type="short sequence motif" description="UFM1-interacting sequence (UIS)" evidence="9 12">
    <location>
        <begin position="334"/>
        <end position="346"/>
    </location>
</feature>
<feature type="short sequence motif" description="UFC1-binding sequence (UFC)" evidence="21">
    <location>
        <begin position="389"/>
        <end position="404"/>
    </location>
</feature>
<feature type="active site" description="Glycyl thioester intermediate" evidence="6 10 12 21">
    <location>
        <position position="250"/>
    </location>
</feature>
<feature type="binding site" evidence="6 12 16 33 34 35">
    <location>
        <position position="83"/>
    </location>
    <ligand>
        <name>ATP</name>
        <dbReference type="ChEBI" id="CHEBI:30616"/>
    </ligand>
</feature>
<feature type="binding site" evidence="6 12 16 33 35">
    <location>
        <position position="104"/>
    </location>
    <ligand>
        <name>ATP</name>
        <dbReference type="ChEBI" id="CHEBI:30616"/>
    </ligand>
</feature>
<feature type="binding site" evidence="6 12 16 33 34 35">
    <location>
        <position position="127"/>
    </location>
    <ligand>
        <name>ATP</name>
        <dbReference type="ChEBI" id="CHEBI:30616"/>
    </ligand>
</feature>
<feature type="binding site" evidence="6 12 16 33 34 35">
    <location>
        <position position="150"/>
    </location>
    <ligand>
        <name>ATP</name>
        <dbReference type="ChEBI" id="CHEBI:30616"/>
    </ligand>
</feature>
<feature type="binding site" evidence="6 12 16 33 34 35">
    <location>
        <position position="184"/>
    </location>
    <ligand>
        <name>ATP</name>
        <dbReference type="ChEBI" id="CHEBI:30616"/>
    </ligand>
</feature>
<feature type="binding site" evidence="6 12 16 32 33 34 35">
    <location>
        <position position="226"/>
    </location>
    <ligand>
        <name>Zn(2+)</name>
        <dbReference type="ChEBI" id="CHEBI:29105"/>
    </ligand>
</feature>
<feature type="binding site" evidence="6 12 16 32 33 34 35">
    <location>
        <position position="229"/>
    </location>
    <ligand>
        <name>Zn(2+)</name>
        <dbReference type="ChEBI" id="CHEBI:29105"/>
    </ligand>
</feature>
<feature type="binding site" evidence="6 12 16 32 33 34 35">
    <location>
        <position position="303"/>
    </location>
    <ligand>
        <name>Zn(2+)</name>
        <dbReference type="ChEBI" id="CHEBI:29105"/>
    </ligand>
</feature>
<feature type="binding site" evidence="6 12 16 32 33 34 35">
    <location>
        <position position="308"/>
    </location>
    <ligand>
        <name>Zn(2+)</name>
        <dbReference type="ChEBI" id="CHEBI:29105"/>
    </ligand>
</feature>
<feature type="modified residue" description="Phosphoserine" evidence="40 42">
    <location>
        <position position="45"/>
    </location>
</feature>
<feature type="modified residue" description="Phosphoserine" evidence="41">
    <location>
        <position position="358"/>
    </location>
</feature>
<feature type="modified residue" description="Phosphoserine" evidence="1">
    <location>
        <position position="393"/>
    </location>
</feature>
<feature type="splice variant" id="VSP_038528" description="In isoform 2." evidence="26">
    <location>
        <begin position="1"/>
        <end position="56"/>
    </location>
</feature>
<feature type="sequence variant" id="VAR_077153" description="In DEE44; reduces UFM1 activating enzyme activity; dbSNP:rs774318611." evidence="10">
    <original>R</original>
    <variation>H</variation>
    <location>
        <position position="55"/>
    </location>
</feature>
<feature type="sequence variant" id="VAR_077154" description="In DEE44; reduces UFM1 activating enzyme activity; reduces UFM1-DDRGK1 formation; dbSNP:rs532178791." evidence="11">
    <original>M</original>
    <variation>V</variation>
    <location>
        <position position="57"/>
    </location>
</feature>
<feature type="sequence variant" id="VAR_077155" description="In DEE44; abolishes UFM1 activating enzyme activity; dbSNP:rs886039761." evidence="11">
    <original>G</original>
    <variation>E</variation>
    <location>
        <position position="168"/>
    </location>
</feature>
<feature type="sequence variant" id="VAR_080409" description="In SCAR24; delocalizes protein to the nucleus; activates degradation through the ubiquitin proteasome pathway; decreases protein stability; disrupts interaction with UFM1." evidence="8">
    <location>
        <begin position="246"/>
        <end position="404"/>
    </location>
</feature>
<feature type="sequence variant" id="VAR_077156" description="In DEE44; reduces UFM1 activating enzyme activity; dbSNP:rs886039759." evidence="11">
    <original>V</original>
    <variation>M</variation>
    <location>
        <position position="260"/>
    </location>
</feature>
<feature type="sequence variant" id="VAR_077157" description="In SCAR24; does not affect cytoplasm localization; decreases protein stability; does not affect interaction with UFM1; dbSNP:rs886039762." evidence="8">
    <original>K</original>
    <variation>E</variation>
    <location>
        <position position="310"/>
    </location>
</feature>
<feature type="sequence variant" id="VAR_077158" description="In DEE44; reduces UFM1 activating enzyme activity; reduces UFM1 activating enzyme activity; reduces UFM1-DDRGK1 formation; dbSNP:rs114925667." evidence="10 11">
    <original>A</original>
    <variation>T</variation>
    <location>
        <position position="371"/>
    </location>
</feature>
<feature type="sequence variant" id="VAR_077159" description="In DEE44; no effect on UFM1 activating enzyme activity; dbSNP:rs886039760." evidence="11">
    <original>D</original>
    <variation>Y</variation>
    <location>
        <position position="389"/>
    </location>
</feature>
<feature type="mutagenesis site" description="Abolished ability to activate UFM1." evidence="12">
    <original>R</original>
    <variation>A</variation>
    <location>
        <position position="188"/>
    </location>
</feature>
<feature type="mutagenesis site" description="Abolished ability to activate UFM1." evidence="12">
    <original>HIQ</original>
    <variation>AQA</variation>
    <location>
        <begin position="215"/>
        <end position="217"/>
    </location>
</feature>
<feature type="mutagenesis site" description="Abolished interaction with UFM1." evidence="12">
    <original>APPL</original>
    <variation>RPPA</variation>
    <variation>FPPA</variation>
    <location>
        <begin position="230"/>
        <end position="233"/>
    </location>
</feature>
<feature type="mutagenesis site" description="Abolished ability to activate UFM1." evidence="12 21">
    <original>C</original>
    <variation>A</variation>
    <location>
        <position position="250"/>
    </location>
</feature>
<feature type="mutagenesis site" description="Forms a stable intermediate complex." evidence="2 10 15">
    <original>C</original>
    <variation>S</variation>
    <location>
        <position position="250"/>
    </location>
</feature>
<feature type="mutagenesis site" description="Impaired ability to activate UFM1 via a trans-binding mechanism." evidence="12">
    <original>K</original>
    <variation>D</variation>
    <location>
        <position position="271"/>
    </location>
</feature>
<feature type="mutagenesis site" description="Impaired homodimerization and ability to activate UFM1 via a trans-binding mechanism." evidence="12 14">
    <original>D</original>
    <variation>K</variation>
    <location>
        <position position="290"/>
    </location>
</feature>
<feature type="mutagenesis site" description="Impaired ability to activate UFM1." evidence="13">
    <original>H</original>
    <variation>A</variation>
    <variation>D</variation>
    <location>
        <position position="336"/>
    </location>
</feature>
<feature type="mutagenesis site" description="Abolished interaction with UFM1 and GABARAPL2." evidence="9 18">
    <original>W</original>
    <variation>A</variation>
    <location>
        <position position="341"/>
    </location>
</feature>
<feature type="mutagenesis site" description="Decreased interaction with UFM1 without affecting interaction with GABARAPL2." evidence="9">
    <original>G</original>
    <variation>A</variation>
    <location>
        <position position="342"/>
    </location>
</feature>
<feature type="mutagenesis site" description="Impaired ability to activate UFM1." evidence="13">
    <original>IEL</original>
    <variation>AEA</variation>
    <location>
        <begin position="343"/>
        <end position="345"/>
    </location>
</feature>
<feature type="mutagenesis site" description="Abolished interaction with UFM1 and decreased interaction with GABARAPL2." evidence="9 18">
    <original>I</original>
    <variation>A</variation>
    <location>
        <position position="343"/>
    </location>
</feature>
<feature type="mutagenesis site" description="Abolished interaction with UFM1 and decreased interaction with GABARAPL2." evidence="9 18">
    <original>L</original>
    <variation>A</variation>
    <location>
        <position position="345"/>
    </location>
</feature>
<feature type="mutagenesis site" description="Abolished interaction with UFM1 and decreased interaction with GABARAPL2." evidence="9 18">
    <original>V</original>
    <variation>A</variation>
    <location>
        <position position="346"/>
    </location>
</feature>
<feature type="mutagenesis site" description="Strongly decreased ability to transfer UFM1 to UFC1." evidence="21">
    <original>Y</original>
    <variation>A</variation>
    <variation>E</variation>
    <location>
        <position position="372"/>
    </location>
</feature>
<feature type="mutagenesis site" description="Does not affect ability to transfer UFM1 to UFC1." evidence="21">
    <original>Y</original>
    <variation>F</variation>
    <location>
        <position position="372"/>
    </location>
</feature>
<feature type="mutagenesis site" description="Abolished interaction with UFC1." evidence="21">
    <original>L</original>
    <variation>R</variation>
    <location>
        <position position="397"/>
    </location>
</feature>
<feature type="mutagenesis site" description="Abolished interaction with UFC1." evidence="21">
    <original>M</original>
    <variation>R</variation>
    <location>
        <position position="401"/>
    </location>
</feature>
<feature type="sequence conflict" description="In Ref. 4; BAB55199." evidence="26" ref="4">
    <original>N</original>
    <variation>S</variation>
    <location>
        <position position="403"/>
    </location>
</feature>
<feature type="helix" evidence="44">
    <location>
        <begin position="54"/>
        <end position="61"/>
    </location>
</feature>
<feature type="helix" evidence="43">
    <location>
        <begin position="70"/>
        <end position="73"/>
    </location>
</feature>
<feature type="strand" evidence="43">
    <location>
        <begin position="75"/>
        <end position="79"/>
    </location>
</feature>
<feature type="helix" evidence="43">
    <location>
        <begin position="83"/>
        <end position="95"/>
    </location>
</feature>
<feature type="strand" evidence="43">
    <location>
        <begin position="98"/>
        <end position="103"/>
    </location>
</feature>
<feature type="helix" evidence="44">
    <location>
        <begin position="110"/>
        <end position="112"/>
    </location>
</feature>
<feature type="strand" evidence="44">
    <location>
        <begin position="115"/>
        <end position="117"/>
    </location>
</feature>
<feature type="helix" evidence="44">
    <location>
        <begin position="120"/>
        <end position="122"/>
    </location>
</feature>
<feature type="helix" evidence="43">
    <location>
        <begin position="127"/>
        <end position="138"/>
    </location>
</feature>
<feature type="strand" evidence="43">
    <location>
        <begin position="142"/>
        <end position="147"/>
    </location>
</feature>
<feature type="helix" evidence="43">
    <location>
        <begin position="154"/>
        <end position="166"/>
    </location>
</feature>
<feature type="strand" evidence="43">
    <location>
        <begin position="167"/>
        <end position="170"/>
    </location>
</feature>
<feature type="strand" evidence="43">
    <location>
        <begin position="176"/>
        <end position="180"/>
    </location>
</feature>
<feature type="helix" evidence="43">
    <location>
        <begin position="185"/>
        <end position="198"/>
    </location>
</feature>
<feature type="strand" evidence="43">
    <location>
        <begin position="202"/>
        <end position="207"/>
    </location>
</feature>
<feature type="strand" evidence="43">
    <location>
        <begin position="211"/>
        <end position="219"/>
    </location>
</feature>
<feature type="turn" evidence="43">
    <location>
        <begin position="221"/>
        <end position="223"/>
    </location>
</feature>
<feature type="strand" evidence="43">
    <location>
        <begin position="229"/>
        <end position="231"/>
    </location>
</feature>
<feature type="helix" evidence="44">
    <location>
        <begin position="233"/>
        <end position="236"/>
    </location>
</feature>
<feature type="helix" evidence="44">
    <location>
        <begin position="241"/>
        <end position="244"/>
    </location>
</feature>
<feature type="helix" evidence="43">
    <location>
        <begin position="247"/>
        <end position="274"/>
    </location>
</feature>
<feature type="strand" evidence="43">
    <location>
        <begin position="281"/>
        <end position="286"/>
    </location>
</feature>
<feature type="turn" evidence="43">
    <location>
        <begin position="287"/>
        <end position="290"/>
    </location>
</feature>
<feature type="helix" evidence="43">
    <location>
        <begin position="306"/>
        <end position="317"/>
    </location>
</feature>
<feature type="strand" evidence="45">
    <location>
        <begin position="342"/>
        <end position="345"/>
    </location>
</feature>
<feature type="strand" evidence="46">
    <location>
        <begin position="382"/>
        <end position="384"/>
    </location>
</feature>
<feature type="helix" evidence="46">
    <location>
        <begin position="394"/>
        <end position="404"/>
    </location>
</feature>
<comment type="function">
    <text evidence="1 2 5 6 7 9 10 11 12 14 16 17 19 21 22">E1-like enzyme which specifically catalyzes the first step in ufmylation (PubMed:15071506, PubMed:18442052, PubMed:20368332, PubMed:25219498, PubMed:26929408, PubMed:27545674, PubMed:27545681, PubMed:27653677, PubMed:30412706, PubMed:30626644, PubMed:34588452). Activates UFM1 by first adenylating its C-terminal glycine residue with ATP, and thereafter linking this residue to the side chain of a cysteine residue in E1, yielding a UFM1-E1 thioester and free AMP (PubMed:20368332, PubMed:26929408, PubMed:27653677, PubMed:30412706). Activates UFM1 via a trans-binding mechanism, in which UFM1 interacts with distinct sites in both subunits of the UBA5 homodimer (PubMed:27653677). Trans-binding also promotes stabilization of the UBA5 homodimer, and enhances ATP-binding (PubMed:29295865). Transfer of UFM1 from UBA5 to the E2-like enzyme UFC1 also takes place using a trans mechanism (PubMed:27653677, PubMed:34588452). Ufmylation plays a key role in various processes, such as ribosome recycling, response to DNA damage, interferon response or reticulophagy (also called ER-phagy) (PubMed:30412706, PubMed:32160526, PubMed:35394863). Ufmylation is essential for erythroid differentiation of both megakaryocytes and erythrocytes (By similarity).</text>
</comment>
<comment type="subunit">
    <text evidence="4 8 9 12 13 14 15 16 18 20 21">Homodimer; homodimerization is required for UFM1 activation (PubMed:27653677, PubMed:29295865). Interacts (via UIS motif) with UFM1; binds UFM1 via a trans-binding mechanism in which UFM1 interacts with distinct sites in both subunits of the UBA5 homodimer (PubMed:26872069, PubMed:26929408, PubMed:27653677, PubMed:28360427, PubMed:29295865, PubMed:30412706). Interacts (via C-terminus) with UFC1 (PubMed:17825256, PubMed:27653677, PubMed:29868776, PubMed:34299007, PubMed:34588452). Interacts (via UIS motif) with GABARAPL2 and, with lower affinity, with GABARAP and GABARAPL1 (PubMed:26929408, PubMed:30990354, PubMed:34299007).</text>
</comment>
<comment type="interaction">
    <interactant intactId="EBI-747805">
        <id>Q9GZZ9</id>
    </interactant>
    <interactant intactId="EBI-712001">
        <id>O95166</id>
        <label>GABARAP</label>
    </interactant>
    <organismsDiffer>false</organismsDiffer>
    <experiments>2</experiments>
</comment>
<comment type="interaction">
    <interactant intactId="EBI-747805">
        <id>Q9GZZ9</id>
    </interactant>
    <interactant intactId="EBI-746969">
        <id>Q9H0R8</id>
        <label>GABARAPL1</label>
    </interactant>
    <organismsDiffer>false</organismsDiffer>
    <experiments>2</experiments>
</comment>
<comment type="interaction">
    <interactant intactId="EBI-747805">
        <id>Q9GZZ9</id>
    </interactant>
    <interactant intactId="EBI-720116">
        <id>P60520</id>
        <label>GABARAPL2</label>
    </interactant>
    <organismsDiffer>false</organismsDiffer>
    <experiments>19</experiments>
</comment>
<comment type="interaction">
    <interactant intactId="EBI-747805">
        <id>Q9GZZ9</id>
    </interactant>
    <interactant intactId="EBI-373144">
        <id>Q9GZQ8</id>
        <label>MAP1LC3B</label>
    </interactant>
    <organismsDiffer>false</organismsDiffer>
    <experiments>2</experiments>
</comment>
<comment type="interaction">
    <interactant intactId="EBI-747805">
        <id>Q9GZZ9</id>
    </interactant>
    <interactant intactId="EBI-2603996">
        <id>Q9BXW4</id>
        <label>MAP1LC3C</label>
    </interactant>
    <organismsDiffer>false</organismsDiffer>
    <experiments>2</experiments>
</comment>
<comment type="interaction">
    <interactant intactId="EBI-747805">
        <id>Q9GZZ9</id>
    </interactant>
    <interactant intactId="EBI-1045061">
        <id>P61960</id>
        <label>UFM1</label>
    </interactant>
    <organismsDiffer>false</organismsDiffer>
    <experiments>7</experiments>
</comment>
<comment type="subcellular location">
    <subcellularLocation>
        <location evidence="5 8">Cytoplasm</location>
    </subcellularLocation>
    <subcellularLocation>
        <location evidence="5">Nucleus</location>
    </subcellularLocation>
    <subcellularLocation>
        <location evidence="18">Endoplasmic reticulum membrane</location>
    </subcellularLocation>
    <subcellularLocation>
        <location evidence="8">Golgi apparatus</location>
    </subcellularLocation>
    <text evidence="5 18">Localizes mainly in the cytoplasm, while it localizes to the nucleus in presence of SUMO2 (PubMed:18442052). Interaction with GABARAPL2 promotes localization to the endoplasmic reticulum membrane (PubMed:30990354).</text>
</comment>
<comment type="alternative products">
    <event type="alternative splicing"/>
    <isoform>
        <id>Q9GZZ9-1</id>
        <name>1</name>
        <name evidence="25">UBE1DC1A</name>
        <sequence type="displayed"/>
    </isoform>
    <isoform>
        <id>Q9GZZ9-2</id>
        <name>2</name>
        <name evidence="25">UBE1DC1B</name>
        <sequence type="described" ref="VSP_038528"/>
    </isoform>
</comment>
<comment type="tissue specificity">
    <text evidence="3">Widely expressed.</text>
</comment>
<comment type="domain">
    <text evidence="21">The UFC1-binding sequence (UFC) motif mediates interaction with UFC1.</text>
</comment>
<comment type="domain">
    <text evidence="21">The linker region is required to activate the active site of UFC1: it region moves next to active site of UFC1 to reduce the amount of water molecules in the vicinity of UFC1's active site and thereby elevate the nucleophilic activity of UFC1 active site.</text>
</comment>
<comment type="domain">
    <text evidence="9">The UFM1-interacting sequence (UIS) motif mediates interaction with both UFM1 and LC3/GABARAP proteins (GABARAP, GABARAPL1 and GABARAPL2).</text>
</comment>
<comment type="domain">
    <molecule>Isoform 1</molecule>
    <text evidence="16">The N-terminus (1-56) contributes to the transfer of UFM1 from UBA5 to UFC1.</text>
</comment>
<comment type="disease" evidence="10 11">
    <disease id="DI-04843">
        <name>Developmental and epileptic encephalopathy 44</name>
        <acronym>DEE44</acronym>
        <description>A form of epileptic encephalopathy, a heterogeneous group of severe early-onset epilepsies characterized by refractory seizures, neurodevelopmental impairment, and poor prognosis. Development is normal prior to seizure onset, after which cognitive and motor delays become apparent. DEE44 transmission pattern is consistent with autosomal recessive inheritance.</description>
        <dbReference type="MIM" id="617132"/>
    </disease>
    <text>The disease is caused by variants affecting the gene represented in this entry.</text>
</comment>
<comment type="disease" evidence="8">
    <disease id="DI-04847">
        <name>Spinocerebellar ataxia, autosomal recessive, 24</name>
        <acronym>SCAR24</acronym>
        <description>A form of spinocerebellar ataxia, a clinically and genetically heterogeneous group of cerebellar disorders due to degeneration of the cerebellum with variable involvement of the brainstem and spinal cord. SCAR24 patients manifest gait instability and speech difficulties with onset in childhood. Clinical features include gait and limb ataxia, dysarthria, nystagmus, cataracts, and cerebellar atrophy on brain imaging.</description>
        <dbReference type="MIM" id="617133"/>
    </disease>
    <text>The disease is caused by variants affecting the gene represented in this entry.</text>
</comment>
<comment type="similarity">
    <text evidence="26">Belongs to the ubiquitin-activating E1 family. UBA5 subfamily.</text>
</comment>
<comment type="caution">
    <text evidence="1 5">Was initially reported to mediate activation of SUMO2 in addition to UFM1 (PubMed:18442052). However, it was later shown that it is specific for UFM1 (By similarity).</text>
</comment>
<name>UBA5_HUMAN</name>
<protein>
    <recommendedName>
        <fullName evidence="26">Ubiquitin-like modifier-activating enzyme 5</fullName>
        <shortName evidence="23">Ubiquitin-activating enzyme 5</shortName>
    </recommendedName>
    <alternativeName>
        <fullName evidence="24">ThiFP1</fullName>
    </alternativeName>
    <alternativeName>
        <fullName evidence="23">UFM1-activating enzyme</fullName>
    </alternativeName>
    <alternativeName>
        <fullName evidence="24">Ubiquitin-activating enzyme E1 domain-containing protein 1</fullName>
    </alternativeName>
</protein>
<accession>Q9GZZ9</accession>
<accession>A6NJL3</accession>
<accession>D3DNC8</accession>
<accession>Q96ST1</accession>
<proteinExistence type="evidence at protein level"/>
<organism>
    <name type="scientific">Homo sapiens</name>
    <name type="common">Human</name>
    <dbReference type="NCBI Taxonomy" id="9606"/>
    <lineage>
        <taxon>Eukaryota</taxon>
        <taxon>Metazoa</taxon>
        <taxon>Chordata</taxon>
        <taxon>Craniata</taxon>
        <taxon>Vertebrata</taxon>
        <taxon>Euteleostomi</taxon>
        <taxon>Mammalia</taxon>
        <taxon>Eutheria</taxon>
        <taxon>Euarchontoglires</taxon>
        <taxon>Primates</taxon>
        <taxon>Haplorrhini</taxon>
        <taxon>Catarrhini</taxon>
        <taxon>Hominidae</taxon>
        <taxon>Homo</taxon>
    </lineage>
</organism>
<gene>
    <name evidence="23 27" type="primary">UBA5</name>
    <name evidence="24" type="synonym">UBE1DC1</name>
</gene>
<dbReference type="EMBL" id="AB154406">
    <property type="protein sequence ID" value="BAD15375.1"/>
    <property type="molecule type" value="mRNA"/>
</dbReference>
<dbReference type="EMBL" id="AY253672">
    <property type="protein sequence ID" value="AAP79600.1"/>
    <property type="molecule type" value="mRNA"/>
</dbReference>
<dbReference type="EMBL" id="AL136757">
    <property type="protein sequence ID" value="CAB66691.1"/>
    <property type="molecule type" value="mRNA"/>
</dbReference>
<dbReference type="EMBL" id="AK026904">
    <property type="protein sequence ID" value="BAB15587.1"/>
    <property type="molecule type" value="mRNA"/>
</dbReference>
<dbReference type="EMBL" id="AK027563">
    <property type="protein sequence ID" value="BAB55199.1"/>
    <property type="molecule type" value="mRNA"/>
</dbReference>
<dbReference type="EMBL" id="AC020632">
    <property type="status" value="NOT_ANNOTATED_CDS"/>
    <property type="molecule type" value="Genomic_DNA"/>
</dbReference>
<dbReference type="EMBL" id="CH471052">
    <property type="protein sequence ID" value="EAW79192.1"/>
    <property type="molecule type" value="Genomic_DNA"/>
</dbReference>
<dbReference type="EMBL" id="CH471052">
    <property type="protein sequence ID" value="EAW79189.1"/>
    <property type="molecule type" value="Genomic_DNA"/>
</dbReference>
<dbReference type="EMBL" id="CH471052">
    <property type="protein sequence ID" value="EAW79191.1"/>
    <property type="molecule type" value="Genomic_DNA"/>
</dbReference>
<dbReference type="EMBL" id="BC009737">
    <property type="protein sequence ID" value="AAH09737.1"/>
    <property type="molecule type" value="mRNA"/>
</dbReference>
<dbReference type="CCDS" id="CCDS3076.1">
    <molecule id="Q9GZZ9-1"/>
</dbReference>
<dbReference type="CCDS" id="CCDS3077.1">
    <molecule id="Q9GZZ9-2"/>
</dbReference>
<dbReference type="RefSeq" id="NP_001307139.1">
    <molecule id="Q9GZZ9-2"/>
    <property type="nucleotide sequence ID" value="NM_001320210.2"/>
</dbReference>
<dbReference type="RefSeq" id="NP_001308167.1">
    <property type="nucleotide sequence ID" value="NM_001321238.1"/>
</dbReference>
<dbReference type="RefSeq" id="NP_001308168.1">
    <property type="nucleotide sequence ID" value="NM_001321239.1"/>
</dbReference>
<dbReference type="RefSeq" id="NP_079094.1">
    <molecule id="Q9GZZ9-1"/>
    <property type="nucleotide sequence ID" value="NM_024818.6"/>
</dbReference>
<dbReference type="RefSeq" id="NP_938143.1">
    <molecule id="Q9GZZ9-2"/>
    <property type="nucleotide sequence ID" value="NM_198329.4"/>
</dbReference>
<dbReference type="PDB" id="3GUC">
    <property type="method" value="X-ray"/>
    <property type="resolution" value="2.25 A"/>
    <property type="chains" value="A/B=57-329"/>
</dbReference>
<dbReference type="PDB" id="3H8V">
    <property type="method" value="X-ray"/>
    <property type="resolution" value="2.00 A"/>
    <property type="chains" value="A/B=57-329"/>
</dbReference>
<dbReference type="PDB" id="5HKH">
    <property type="method" value="X-ray"/>
    <property type="resolution" value="2.55 A"/>
    <property type="chains" value="B=338-346"/>
</dbReference>
<dbReference type="PDB" id="5IA8">
    <property type="method" value="X-ray"/>
    <property type="resolution" value="2.00 A"/>
    <property type="chains" value="A/B=334-346, A/B=349-374"/>
</dbReference>
<dbReference type="PDB" id="5IAA">
    <property type="method" value="X-ray"/>
    <property type="resolution" value="1.85 A"/>
    <property type="chains" value="A/B=57-346"/>
</dbReference>
<dbReference type="PDB" id="5L95">
    <property type="method" value="X-ray"/>
    <property type="resolution" value="2.10 A"/>
    <property type="chains" value="A/B=68-346"/>
</dbReference>
<dbReference type="PDB" id="6H77">
    <property type="method" value="X-ray"/>
    <property type="resolution" value="2.10 A"/>
    <property type="chains" value="A/B/C/D=36-346"/>
</dbReference>
<dbReference type="PDB" id="6H78">
    <property type="method" value="X-ray"/>
    <property type="resolution" value="2.70 A"/>
    <property type="chains" value="A/B/C/D/E/F/G/H/I/J/K/L/M/N/O/P=36-335"/>
</dbReference>
<dbReference type="PDB" id="6H8C">
    <property type="method" value="NMR"/>
    <property type="chains" value="B=333-348"/>
</dbReference>
<dbReference type="PDB" id="7NVK">
    <property type="method" value="X-ray"/>
    <property type="resolution" value="2.65 A"/>
    <property type="chains" value="AAA=347-404"/>
</dbReference>
<dbReference type="PDB" id="7NW1">
    <property type="method" value="X-ray"/>
    <property type="resolution" value="1.95 A"/>
    <property type="chains" value="CCC/FFF=389-404"/>
</dbReference>
<dbReference type="PDB" id="7OVC">
    <property type="method" value="NMR"/>
    <property type="chains" value="B=381-404"/>
</dbReference>
<dbReference type="PDBsum" id="3GUC"/>
<dbReference type="PDBsum" id="3H8V"/>
<dbReference type="PDBsum" id="5HKH"/>
<dbReference type="PDBsum" id="5IA8"/>
<dbReference type="PDBsum" id="5IAA"/>
<dbReference type="PDBsum" id="5L95"/>
<dbReference type="PDBsum" id="6H77"/>
<dbReference type="PDBsum" id="6H78"/>
<dbReference type="PDBsum" id="6H8C"/>
<dbReference type="PDBsum" id="7NVK"/>
<dbReference type="PDBsum" id="7NW1"/>
<dbReference type="PDBsum" id="7OVC"/>
<dbReference type="SASBDB" id="Q9GZZ9"/>
<dbReference type="SMR" id="Q9GZZ9"/>
<dbReference type="BioGRID" id="122964">
    <property type="interactions" value="134"/>
</dbReference>
<dbReference type="ELM" id="Q9GZZ9"/>
<dbReference type="FunCoup" id="Q9GZZ9">
    <property type="interactions" value="3968"/>
</dbReference>
<dbReference type="IntAct" id="Q9GZZ9">
    <property type="interactions" value="90"/>
</dbReference>
<dbReference type="MINT" id="Q9GZZ9"/>
<dbReference type="STRING" id="9606.ENSP00000348565"/>
<dbReference type="ChEMBL" id="CHEMBL2016429"/>
<dbReference type="GlyGen" id="Q9GZZ9">
    <property type="glycosylation" value="1 site, 1 O-linked glycan (1 site)"/>
</dbReference>
<dbReference type="iPTMnet" id="Q9GZZ9"/>
<dbReference type="MetOSite" id="Q9GZZ9"/>
<dbReference type="PhosphoSitePlus" id="Q9GZZ9"/>
<dbReference type="SwissPalm" id="Q9GZZ9"/>
<dbReference type="BioMuta" id="UBA5"/>
<dbReference type="DMDM" id="74733510"/>
<dbReference type="jPOST" id="Q9GZZ9"/>
<dbReference type="MassIVE" id="Q9GZZ9"/>
<dbReference type="PaxDb" id="9606-ENSP00000348565"/>
<dbReference type="PeptideAtlas" id="Q9GZZ9"/>
<dbReference type="ProteomicsDB" id="80189">
    <molecule id="Q9GZZ9-1"/>
</dbReference>
<dbReference type="ProteomicsDB" id="80190">
    <molecule id="Q9GZZ9-2"/>
</dbReference>
<dbReference type="Pumba" id="Q9GZZ9"/>
<dbReference type="Antibodypedia" id="2258">
    <property type="antibodies" value="164 antibodies from 31 providers"/>
</dbReference>
<dbReference type="DNASU" id="79876"/>
<dbReference type="Ensembl" id="ENST00000264991.8">
    <molecule id="Q9GZZ9-2"/>
    <property type="protein sequence ID" value="ENSP00000264991.4"/>
    <property type="gene ID" value="ENSG00000081307.15"/>
</dbReference>
<dbReference type="Ensembl" id="ENST00000356232.10">
    <molecule id="Q9GZZ9-1"/>
    <property type="protein sequence ID" value="ENSP00000348565.4"/>
    <property type="gene ID" value="ENSG00000081307.15"/>
</dbReference>
<dbReference type="Ensembl" id="ENST00000494238.6">
    <molecule id="Q9GZZ9-2"/>
    <property type="protein sequence ID" value="ENSP00000418807.2"/>
    <property type="gene ID" value="ENSG00000081307.15"/>
</dbReference>
<dbReference type="GeneID" id="79876"/>
<dbReference type="KEGG" id="hsa:79876"/>
<dbReference type="MANE-Select" id="ENST00000356232.10">
    <property type="protein sequence ID" value="ENSP00000348565.4"/>
    <property type="RefSeq nucleotide sequence ID" value="NM_024818.6"/>
    <property type="RefSeq protein sequence ID" value="NP_079094.1"/>
</dbReference>
<dbReference type="UCSC" id="uc003epa.5">
    <molecule id="Q9GZZ9-1"/>
    <property type="organism name" value="human"/>
</dbReference>
<dbReference type="AGR" id="HGNC:23230"/>
<dbReference type="CTD" id="79876"/>
<dbReference type="DisGeNET" id="79876"/>
<dbReference type="GeneCards" id="UBA5"/>
<dbReference type="HGNC" id="HGNC:23230">
    <property type="gene designation" value="UBA5"/>
</dbReference>
<dbReference type="HPA" id="ENSG00000081307">
    <property type="expression patterns" value="Low tissue specificity"/>
</dbReference>
<dbReference type="MalaCards" id="UBA5"/>
<dbReference type="MIM" id="610552">
    <property type="type" value="gene"/>
</dbReference>
<dbReference type="MIM" id="617132">
    <property type="type" value="phenotype"/>
</dbReference>
<dbReference type="MIM" id="617133">
    <property type="type" value="phenotype"/>
</dbReference>
<dbReference type="neXtProt" id="NX_Q9GZZ9"/>
<dbReference type="OpenTargets" id="ENSG00000081307"/>
<dbReference type="Orphanet" id="442835">
    <property type="disease" value="Non-specific early-onset epileptic encephalopathy"/>
</dbReference>
<dbReference type="PharmGKB" id="PA162407661"/>
<dbReference type="VEuPathDB" id="HostDB:ENSG00000081307"/>
<dbReference type="eggNOG" id="KOG2336">
    <property type="taxonomic scope" value="Eukaryota"/>
</dbReference>
<dbReference type="GeneTree" id="ENSGT00940000156177"/>
<dbReference type="InParanoid" id="Q9GZZ9"/>
<dbReference type="OMA" id="MNIVKDY"/>
<dbReference type="OrthoDB" id="206053at2759"/>
<dbReference type="PAN-GO" id="Q9GZZ9">
    <property type="GO annotations" value="4 GO annotations based on evolutionary models"/>
</dbReference>
<dbReference type="PhylomeDB" id="Q9GZZ9"/>
<dbReference type="TreeFam" id="TF314168"/>
<dbReference type="BRENDA" id="6.2.1.45">
    <property type="organism ID" value="2681"/>
</dbReference>
<dbReference type="PathwayCommons" id="Q9GZZ9"/>
<dbReference type="Reactome" id="R-HSA-983168">
    <property type="pathway name" value="Antigen processing: Ubiquitination &amp; Proteasome degradation"/>
</dbReference>
<dbReference type="SignaLink" id="Q9GZZ9"/>
<dbReference type="BioGRID-ORCS" id="79876">
    <property type="hits" value="456 hits in 1174 CRISPR screens"/>
</dbReference>
<dbReference type="ChiTaRS" id="UBA5">
    <property type="organism name" value="human"/>
</dbReference>
<dbReference type="EvolutionaryTrace" id="Q9GZZ9"/>
<dbReference type="GeneWiki" id="UBE1DC1"/>
<dbReference type="GenomeRNAi" id="79876"/>
<dbReference type="Pharos" id="Q9GZZ9">
    <property type="development level" value="Tbio"/>
</dbReference>
<dbReference type="PRO" id="PR:Q9GZZ9"/>
<dbReference type="Proteomes" id="UP000005640">
    <property type="component" value="Chromosome 3"/>
</dbReference>
<dbReference type="RNAct" id="Q9GZZ9">
    <property type="molecule type" value="protein"/>
</dbReference>
<dbReference type="Bgee" id="ENSG00000081307">
    <property type="expression patterns" value="Expressed in body of pancreas and 196 other cell types or tissues"/>
</dbReference>
<dbReference type="ExpressionAtlas" id="Q9GZZ9">
    <property type="expression patterns" value="baseline and differential"/>
</dbReference>
<dbReference type="GO" id="GO:0005737">
    <property type="term" value="C:cytoplasm"/>
    <property type="evidence" value="ECO:0000314"/>
    <property type="project" value="UniProtKB"/>
</dbReference>
<dbReference type="GO" id="GO:0005829">
    <property type="term" value="C:cytosol"/>
    <property type="evidence" value="ECO:0000314"/>
    <property type="project" value="HPA"/>
</dbReference>
<dbReference type="GO" id="GO:0005789">
    <property type="term" value="C:endoplasmic reticulum membrane"/>
    <property type="evidence" value="ECO:0000314"/>
    <property type="project" value="UniProtKB"/>
</dbReference>
<dbReference type="GO" id="GO:0005794">
    <property type="term" value="C:Golgi apparatus"/>
    <property type="evidence" value="ECO:0007669"/>
    <property type="project" value="UniProtKB-SubCell"/>
</dbReference>
<dbReference type="GO" id="GO:0043231">
    <property type="term" value="C:intracellular membrane-bounded organelle"/>
    <property type="evidence" value="ECO:0000314"/>
    <property type="project" value="HPA"/>
</dbReference>
<dbReference type="GO" id="GO:0005634">
    <property type="term" value="C:nucleus"/>
    <property type="evidence" value="ECO:0007669"/>
    <property type="project" value="UniProtKB-SubCell"/>
</dbReference>
<dbReference type="GO" id="GO:0005524">
    <property type="term" value="F:ATP binding"/>
    <property type="evidence" value="ECO:0007669"/>
    <property type="project" value="UniProtKB-KW"/>
</dbReference>
<dbReference type="GO" id="GO:0042803">
    <property type="term" value="F:protein homodimerization activity"/>
    <property type="evidence" value="ECO:0000314"/>
    <property type="project" value="UniProtKB"/>
</dbReference>
<dbReference type="GO" id="GO:0071566">
    <property type="term" value="F:UFM1 activating enzyme activity"/>
    <property type="evidence" value="ECO:0000314"/>
    <property type="project" value="UniProtKB"/>
</dbReference>
<dbReference type="GO" id="GO:0008270">
    <property type="term" value="F:zinc ion binding"/>
    <property type="evidence" value="ECO:0000314"/>
    <property type="project" value="UniProtKB"/>
</dbReference>
<dbReference type="GO" id="GO:0030218">
    <property type="term" value="P:erythrocyte differentiation"/>
    <property type="evidence" value="ECO:0000250"/>
    <property type="project" value="UniProtKB"/>
</dbReference>
<dbReference type="GO" id="GO:0030219">
    <property type="term" value="P:megakaryocyte differentiation"/>
    <property type="evidence" value="ECO:0000250"/>
    <property type="project" value="UniProtKB"/>
</dbReference>
<dbReference type="GO" id="GO:0050905">
    <property type="term" value="P:neuromuscular process"/>
    <property type="evidence" value="ECO:0000316"/>
    <property type="project" value="UniProtKB"/>
</dbReference>
<dbReference type="GO" id="GO:1990592">
    <property type="term" value="P:protein K69-linked ufmylation"/>
    <property type="evidence" value="ECO:0000314"/>
    <property type="project" value="UniProtKB"/>
</dbReference>
<dbReference type="GO" id="GO:0071569">
    <property type="term" value="P:protein ufmylation"/>
    <property type="evidence" value="ECO:0000314"/>
    <property type="project" value="UniProtKB"/>
</dbReference>
<dbReference type="GO" id="GO:0033146">
    <property type="term" value="P:regulation of intracellular estrogen receptor signaling pathway"/>
    <property type="evidence" value="ECO:0000315"/>
    <property type="project" value="UniProtKB"/>
</dbReference>
<dbReference type="GO" id="GO:0032649">
    <property type="term" value="P:regulation of type II interferon production"/>
    <property type="evidence" value="ECO:0007669"/>
    <property type="project" value="Ensembl"/>
</dbReference>
<dbReference type="GO" id="GO:0034976">
    <property type="term" value="P:response to endoplasmic reticulum stress"/>
    <property type="evidence" value="ECO:0000314"/>
    <property type="project" value="MGI"/>
</dbReference>
<dbReference type="GO" id="GO:0061709">
    <property type="term" value="P:reticulophagy"/>
    <property type="evidence" value="ECO:0000315"/>
    <property type="project" value="UniProtKB"/>
</dbReference>
<dbReference type="CDD" id="cd00757">
    <property type="entry name" value="ThiF_MoeB_HesA_family"/>
    <property type="match status" value="1"/>
</dbReference>
<dbReference type="FunFam" id="3.40.50.720:FF:000066">
    <property type="entry name" value="Putative ubiquitin-like modifier-activating enzyme 5"/>
    <property type="match status" value="1"/>
</dbReference>
<dbReference type="Gene3D" id="3.40.50.720">
    <property type="entry name" value="NAD(P)-binding Rossmann-like Domain"/>
    <property type="match status" value="1"/>
</dbReference>
<dbReference type="InterPro" id="IPR029752">
    <property type="entry name" value="D-isomer_DH_CS1"/>
</dbReference>
<dbReference type="InterPro" id="IPR045886">
    <property type="entry name" value="ThiF/MoeB/HesA"/>
</dbReference>
<dbReference type="InterPro" id="IPR000594">
    <property type="entry name" value="ThiF_NAD_FAD-bd"/>
</dbReference>
<dbReference type="InterPro" id="IPR035985">
    <property type="entry name" value="Ubiquitin-activating_enz"/>
</dbReference>
<dbReference type="PANTHER" id="PTHR10953">
    <property type="entry name" value="UBIQUITIN-ACTIVATING ENZYME E1"/>
    <property type="match status" value="1"/>
</dbReference>
<dbReference type="PANTHER" id="PTHR10953:SF9">
    <property type="entry name" value="UBIQUITIN-LIKE MODIFIER-ACTIVATING ENZYME 5"/>
    <property type="match status" value="1"/>
</dbReference>
<dbReference type="Pfam" id="PF00899">
    <property type="entry name" value="ThiF"/>
    <property type="match status" value="1"/>
</dbReference>
<dbReference type="SUPFAM" id="SSF69572">
    <property type="entry name" value="Activating enzymes of the ubiquitin-like proteins"/>
    <property type="match status" value="1"/>
</dbReference>
<sequence length="404" mass="44863">MAESVERLQQRVQELERELAQERSLQVPRSGDGGGGRVRIEKMSSEVVDSNPYSRLMALKRMGIVSDYEKIRTFAVAIVGVGGVGSVTAEMLTRCGIGKLLLFDYDKVELANMNRLFFQPHQAGLSKVQAAEHTLRNINPDVLFEVHNYNITTVENFQHFMDRISNGGLEEGKPVDLVLSCVDNFEARMTINTACNELGQTWMESGVSENAVSGHIQLIIPGESACFACAPPLVVAANIDEKTLKREGVCAASLPTTMGVVAGILVQNVLKFLLNFGTVSFYLGYNAMQDFFPTMSMKPNPQCDDRNCRKQQEEYKKKVAALPKQEVIQEEEEIIHEDNEWGIELVSEVSEEELKNFSGPVPDLPEGITVAYTIPKKQEDSVTELTVEDSGESLEDLMAKMKNM</sequence>